<comment type="function">
    <text evidence="1">Binds to the 23S rRNA.</text>
</comment>
<comment type="similarity">
    <text evidence="1">Belongs to the bacterial ribosomal protein bL9 family.</text>
</comment>
<protein>
    <recommendedName>
        <fullName evidence="1">Large ribosomal subunit protein bL9</fullName>
    </recommendedName>
    <alternativeName>
        <fullName evidence="2">50S ribosomal protein L9</fullName>
    </alternativeName>
</protein>
<feature type="chain" id="PRO_1000196269" description="Large ribosomal subunit protein bL9">
    <location>
        <begin position="1"/>
        <end position="150"/>
    </location>
</feature>
<accession>C1CNH8</accession>
<dbReference type="EMBL" id="CP000920">
    <property type="protein sequence ID" value="ACO20311.1"/>
    <property type="molecule type" value="Genomic_DNA"/>
</dbReference>
<dbReference type="RefSeq" id="WP_000864220.1">
    <property type="nucleotide sequence ID" value="NC_012467.1"/>
</dbReference>
<dbReference type="SMR" id="C1CNH8"/>
<dbReference type="GeneID" id="45652575"/>
<dbReference type="KEGG" id="spp:SPP_2257"/>
<dbReference type="HOGENOM" id="CLU_078938_3_2_9"/>
<dbReference type="GO" id="GO:1990904">
    <property type="term" value="C:ribonucleoprotein complex"/>
    <property type="evidence" value="ECO:0007669"/>
    <property type="project" value="UniProtKB-KW"/>
</dbReference>
<dbReference type="GO" id="GO:0005840">
    <property type="term" value="C:ribosome"/>
    <property type="evidence" value="ECO:0007669"/>
    <property type="project" value="UniProtKB-KW"/>
</dbReference>
<dbReference type="GO" id="GO:0019843">
    <property type="term" value="F:rRNA binding"/>
    <property type="evidence" value="ECO:0007669"/>
    <property type="project" value="UniProtKB-UniRule"/>
</dbReference>
<dbReference type="GO" id="GO:0003735">
    <property type="term" value="F:structural constituent of ribosome"/>
    <property type="evidence" value="ECO:0007669"/>
    <property type="project" value="InterPro"/>
</dbReference>
<dbReference type="GO" id="GO:0006412">
    <property type="term" value="P:translation"/>
    <property type="evidence" value="ECO:0007669"/>
    <property type="project" value="UniProtKB-UniRule"/>
</dbReference>
<dbReference type="FunFam" id="3.10.430.100:FF:000009">
    <property type="entry name" value="50S ribosomal protein L9"/>
    <property type="match status" value="1"/>
</dbReference>
<dbReference type="FunFam" id="3.40.5.10:FF:000002">
    <property type="entry name" value="50S ribosomal protein L9"/>
    <property type="match status" value="1"/>
</dbReference>
<dbReference type="Gene3D" id="3.10.430.100">
    <property type="entry name" value="Ribosomal protein L9, C-terminal domain"/>
    <property type="match status" value="1"/>
</dbReference>
<dbReference type="Gene3D" id="3.40.5.10">
    <property type="entry name" value="Ribosomal protein L9, N-terminal domain"/>
    <property type="match status" value="1"/>
</dbReference>
<dbReference type="HAMAP" id="MF_00503">
    <property type="entry name" value="Ribosomal_bL9"/>
    <property type="match status" value="1"/>
</dbReference>
<dbReference type="InterPro" id="IPR000244">
    <property type="entry name" value="Ribosomal_bL9"/>
</dbReference>
<dbReference type="InterPro" id="IPR009027">
    <property type="entry name" value="Ribosomal_bL9/RNase_H1_N"/>
</dbReference>
<dbReference type="InterPro" id="IPR020594">
    <property type="entry name" value="Ribosomal_bL9_bac/chp"/>
</dbReference>
<dbReference type="InterPro" id="IPR020069">
    <property type="entry name" value="Ribosomal_bL9_C"/>
</dbReference>
<dbReference type="InterPro" id="IPR036791">
    <property type="entry name" value="Ribosomal_bL9_C_sf"/>
</dbReference>
<dbReference type="InterPro" id="IPR020070">
    <property type="entry name" value="Ribosomal_bL9_N"/>
</dbReference>
<dbReference type="InterPro" id="IPR036935">
    <property type="entry name" value="Ribosomal_bL9_N_sf"/>
</dbReference>
<dbReference type="NCBIfam" id="TIGR00158">
    <property type="entry name" value="L9"/>
    <property type="match status" value="1"/>
</dbReference>
<dbReference type="PANTHER" id="PTHR21368">
    <property type="entry name" value="50S RIBOSOMAL PROTEIN L9"/>
    <property type="match status" value="1"/>
</dbReference>
<dbReference type="Pfam" id="PF03948">
    <property type="entry name" value="Ribosomal_L9_C"/>
    <property type="match status" value="1"/>
</dbReference>
<dbReference type="Pfam" id="PF01281">
    <property type="entry name" value="Ribosomal_L9_N"/>
    <property type="match status" value="1"/>
</dbReference>
<dbReference type="SUPFAM" id="SSF55658">
    <property type="entry name" value="L9 N-domain-like"/>
    <property type="match status" value="1"/>
</dbReference>
<dbReference type="SUPFAM" id="SSF55653">
    <property type="entry name" value="Ribosomal protein L9 C-domain"/>
    <property type="match status" value="1"/>
</dbReference>
<dbReference type="PROSITE" id="PS00651">
    <property type="entry name" value="RIBOSOMAL_L9"/>
    <property type="match status" value="1"/>
</dbReference>
<proteinExistence type="inferred from homology"/>
<evidence type="ECO:0000255" key="1">
    <source>
        <dbReference type="HAMAP-Rule" id="MF_00503"/>
    </source>
</evidence>
<evidence type="ECO:0000305" key="2"/>
<keyword id="KW-0687">Ribonucleoprotein</keyword>
<keyword id="KW-0689">Ribosomal protein</keyword>
<keyword id="KW-0694">RNA-binding</keyword>
<keyword id="KW-0699">rRNA-binding</keyword>
<name>RL9_STRZP</name>
<sequence>MKVIFLADVKGKGKKGEIKEVPTGYAQNFLIKKNLAKEATAQAVGELRGKQKSEEKAHAEMIAEGKAIKAQLEAEETVVEFVEKVGPDGRTFGSITNKKIAEELQKQFGIKIDKRHIQVQAPIRAVGLIDVPVKIYQDITSVINLRVKEG</sequence>
<reference key="1">
    <citation type="journal article" date="2010" name="Genome Biol.">
        <title>Structure and dynamics of the pan-genome of Streptococcus pneumoniae and closely related species.</title>
        <authorList>
            <person name="Donati C."/>
            <person name="Hiller N.L."/>
            <person name="Tettelin H."/>
            <person name="Muzzi A."/>
            <person name="Croucher N.J."/>
            <person name="Angiuoli S.V."/>
            <person name="Oggioni M."/>
            <person name="Dunning Hotopp J.C."/>
            <person name="Hu F.Z."/>
            <person name="Riley D.R."/>
            <person name="Covacci A."/>
            <person name="Mitchell T.J."/>
            <person name="Bentley S.D."/>
            <person name="Kilian M."/>
            <person name="Ehrlich G.D."/>
            <person name="Rappuoli R."/>
            <person name="Moxon E.R."/>
            <person name="Masignani V."/>
        </authorList>
    </citation>
    <scope>NUCLEOTIDE SEQUENCE [LARGE SCALE GENOMIC DNA]</scope>
    <source>
        <strain>P1031</strain>
    </source>
</reference>
<organism>
    <name type="scientific">Streptococcus pneumoniae (strain P1031)</name>
    <dbReference type="NCBI Taxonomy" id="488223"/>
    <lineage>
        <taxon>Bacteria</taxon>
        <taxon>Bacillati</taxon>
        <taxon>Bacillota</taxon>
        <taxon>Bacilli</taxon>
        <taxon>Lactobacillales</taxon>
        <taxon>Streptococcaceae</taxon>
        <taxon>Streptococcus</taxon>
    </lineage>
</organism>
<gene>
    <name evidence="1" type="primary">rplI</name>
    <name type="ordered locus">SPP_2257</name>
</gene>